<sequence>MDTVSLTGKELAAALNADTKQRAEALTAGGVAARLALIVANDDPASAWYVNSLRKAAERLGIACERIDLGADATADGIRAELRERSADPAFDAIMLQTPLPASVALDDVSSAIAADKDVDGVSPLSLGLLAAGLAGFVPATAQAVVELLKHHEIALSGRHVAVVGRSNVVGKPLAQLLLAENATVTVCHSRTTDLAAITSTADVVVAAVGRAGLVTGDHVRAGAVVVDVGTNEAEDGGIVGDVDAESVRGKAAGLSPVPGGVGPVTTALLMRHVVEAAERHRG</sequence>
<gene>
    <name evidence="1" type="primary">folD</name>
    <name type="ordered locus">NFA_34300</name>
</gene>
<dbReference type="EC" id="1.5.1.5" evidence="1"/>
<dbReference type="EC" id="3.5.4.9" evidence="1"/>
<dbReference type="EMBL" id="AP006618">
    <property type="protein sequence ID" value="BAD58278.1"/>
    <property type="molecule type" value="Genomic_DNA"/>
</dbReference>
<dbReference type="RefSeq" id="WP_011209963.1">
    <property type="nucleotide sequence ID" value="NC_006361.1"/>
</dbReference>
<dbReference type="SMR" id="Q5YU63"/>
<dbReference type="STRING" id="247156.NFA_34300"/>
<dbReference type="GeneID" id="61134135"/>
<dbReference type="KEGG" id="nfa:NFA_34300"/>
<dbReference type="eggNOG" id="COG0190">
    <property type="taxonomic scope" value="Bacteria"/>
</dbReference>
<dbReference type="HOGENOM" id="CLU_034045_2_1_11"/>
<dbReference type="OrthoDB" id="9803580at2"/>
<dbReference type="UniPathway" id="UPA00193"/>
<dbReference type="Proteomes" id="UP000006820">
    <property type="component" value="Chromosome"/>
</dbReference>
<dbReference type="GO" id="GO:0005829">
    <property type="term" value="C:cytosol"/>
    <property type="evidence" value="ECO:0007669"/>
    <property type="project" value="TreeGrafter"/>
</dbReference>
<dbReference type="GO" id="GO:0004477">
    <property type="term" value="F:methenyltetrahydrofolate cyclohydrolase activity"/>
    <property type="evidence" value="ECO:0007669"/>
    <property type="project" value="UniProtKB-UniRule"/>
</dbReference>
<dbReference type="GO" id="GO:0004488">
    <property type="term" value="F:methylenetetrahydrofolate dehydrogenase (NADP+) activity"/>
    <property type="evidence" value="ECO:0007669"/>
    <property type="project" value="UniProtKB-UniRule"/>
</dbReference>
<dbReference type="GO" id="GO:0000105">
    <property type="term" value="P:L-histidine biosynthetic process"/>
    <property type="evidence" value="ECO:0007669"/>
    <property type="project" value="UniProtKB-KW"/>
</dbReference>
<dbReference type="GO" id="GO:0009086">
    <property type="term" value="P:methionine biosynthetic process"/>
    <property type="evidence" value="ECO:0007669"/>
    <property type="project" value="UniProtKB-KW"/>
</dbReference>
<dbReference type="GO" id="GO:0006164">
    <property type="term" value="P:purine nucleotide biosynthetic process"/>
    <property type="evidence" value="ECO:0007669"/>
    <property type="project" value="UniProtKB-KW"/>
</dbReference>
<dbReference type="GO" id="GO:0035999">
    <property type="term" value="P:tetrahydrofolate interconversion"/>
    <property type="evidence" value="ECO:0007669"/>
    <property type="project" value="UniProtKB-UniRule"/>
</dbReference>
<dbReference type="CDD" id="cd01080">
    <property type="entry name" value="NAD_bind_m-THF_DH_Cyclohyd"/>
    <property type="match status" value="1"/>
</dbReference>
<dbReference type="FunFam" id="3.40.50.720:FF:000094">
    <property type="entry name" value="Bifunctional protein FolD"/>
    <property type="match status" value="1"/>
</dbReference>
<dbReference type="Gene3D" id="3.40.50.10860">
    <property type="entry name" value="Leucine Dehydrogenase, chain A, domain 1"/>
    <property type="match status" value="1"/>
</dbReference>
<dbReference type="Gene3D" id="3.40.50.720">
    <property type="entry name" value="NAD(P)-binding Rossmann-like Domain"/>
    <property type="match status" value="1"/>
</dbReference>
<dbReference type="HAMAP" id="MF_01576">
    <property type="entry name" value="THF_DHG_CYH"/>
    <property type="match status" value="1"/>
</dbReference>
<dbReference type="InterPro" id="IPR046346">
    <property type="entry name" value="Aminoacid_DH-like_N_sf"/>
</dbReference>
<dbReference type="InterPro" id="IPR036291">
    <property type="entry name" value="NAD(P)-bd_dom_sf"/>
</dbReference>
<dbReference type="InterPro" id="IPR000672">
    <property type="entry name" value="THF_DH/CycHdrlase"/>
</dbReference>
<dbReference type="InterPro" id="IPR020630">
    <property type="entry name" value="THF_DH/CycHdrlase_cat_dom"/>
</dbReference>
<dbReference type="InterPro" id="IPR020631">
    <property type="entry name" value="THF_DH/CycHdrlase_NAD-bd_dom"/>
</dbReference>
<dbReference type="PANTHER" id="PTHR48099:SF5">
    <property type="entry name" value="C-1-TETRAHYDROFOLATE SYNTHASE, CYTOPLASMIC"/>
    <property type="match status" value="1"/>
</dbReference>
<dbReference type="PANTHER" id="PTHR48099">
    <property type="entry name" value="C-1-TETRAHYDROFOLATE SYNTHASE, CYTOPLASMIC-RELATED"/>
    <property type="match status" value="1"/>
</dbReference>
<dbReference type="Pfam" id="PF00763">
    <property type="entry name" value="THF_DHG_CYH"/>
    <property type="match status" value="1"/>
</dbReference>
<dbReference type="Pfam" id="PF02882">
    <property type="entry name" value="THF_DHG_CYH_C"/>
    <property type="match status" value="1"/>
</dbReference>
<dbReference type="PRINTS" id="PR00085">
    <property type="entry name" value="THFDHDRGNASE"/>
</dbReference>
<dbReference type="SUPFAM" id="SSF53223">
    <property type="entry name" value="Aminoacid dehydrogenase-like, N-terminal domain"/>
    <property type="match status" value="1"/>
</dbReference>
<dbReference type="SUPFAM" id="SSF51735">
    <property type="entry name" value="NAD(P)-binding Rossmann-fold domains"/>
    <property type="match status" value="1"/>
</dbReference>
<protein>
    <recommendedName>
        <fullName evidence="1">Bifunctional protein FolD</fullName>
    </recommendedName>
    <domain>
        <recommendedName>
            <fullName evidence="1">Methylenetetrahydrofolate dehydrogenase</fullName>
            <ecNumber evidence="1">1.5.1.5</ecNumber>
        </recommendedName>
    </domain>
    <domain>
        <recommendedName>
            <fullName evidence="1">Methenyltetrahydrofolate cyclohydrolase</fullName>
            <ecNumber evidence="1">3.5.4.9</ecNumber>
        </recommendedName>
    </domain>
</protein>
<comment type="function">
    <text evidence="1">Catalyzes the oxidation of 5,10-methylenetetrahydrofolate to 5,10-methenyltetrahydrofolate and then the hydrolysis of 5,10-methenyltetrahydrofolate to 10-formyltetrahydrofolate.</text>
</comment>
<comment type="catalytic activity">
    <reaction evidence="1">
        <text>(6R)-5,10-methylene-5,6,7,8-tetrahydrofolate + NADP(+) = (6R)-5,10-methenyltetrahydrofolate + NADPH</text>
        <dbReference type="Rhea" id="RHEA:22812"/>
        <dbReference type="ChEBI" id="CHEBI:15636"/>
        <dbReference type="ChEBI" id="CHEBI:57455"/>
        <dbReference type="ChEBI" id="CHEBI:57783"/>
        <dbReference type="ChEBI" id="CHEBI:58349"/>
        <dbReference type="EC" id="1.5.1.5"/>
    </reaction>
</comment>
<comment type="catalytic activity">
    <reaction evidence="1">
        <text>(6R)-5,10-methenyltetrahydrofolate + H2O = (6R)-10-formyltetrahydrofolate + H(+)</text>
        <dbReference type="Rhea" id="RHEA:23700"/>
        <dbReference type="ChEBI" id="CHEBI:15377"/>
        <dbReference type="ChEBI" id="CHEBI:15378"/>
        <dbReference type="ChEBI" id="CHEBI:57455"/>
        <dbReference type="ChEBI" id="CHEBI:195366"/>
        <dbReference type="EC" id="3.5.4.9"/>
    </reaction>
</comment>
<comment type="pathway">
    <text evidence="1">One-carbon metabolism; tetrahydrofolate interconversion.</text>
</comment>
<comment type="subunit">
    <text evidence="1">Homodimer.</text>
</comment>
<comment type="similarity">
    <text evidence="1">Belongs to the tetrahydrofolate dehydrogenase/cyclohydrolase family.</text>
</comment>
<organism>
    <name type="scientific">Nocardia farcinica (strain IFM 10152)</name>
    <dbReference type="NCBI Taxonomy" id="247156"/>
    <lineage>
        <taxon>Bacteria</taxon>
        <taxon>Bacillati</taxon>
        <taxon>Actinomycetota</taxon>
        <taxon>Actinomycetes</taxon>
        <taxon>Mycobacteriales</taxon>
        <taxon>Nocardiaceae</taxon>
        <taxon>Nocardia</taxon>
    </lineage>
</organism>
<reference key="1">
    <citation type="journal article" date="2004" name="Proc. Natl. Acad. Sci. U.S.A.">
        <title>The complete genomic sequence of Nocardia farcinica IFM 10152.</title>
        <authorList>
            <person name="Ishikawa J."/>
            <person name="Yamashita A."/>
            <person name="Mikami Y."/>
            <person name="Hoshino Y."/>
            <person name="Kurita H."/>
            <person name="Hotta K."/>
            <person name="Shiba T."/>
            <person name="Hattori M."/>
        </authorList>
    </citation>
    <scope>NUCLEOTIDE SEQUENCE [LARGE SCALE GENOMIC DNA]</scope>
    <source>
        <strain>IFM 10152</strain>
    </source>
</reference>
<accession>Q5YU63</accession>
<feature type="chain" id="PRO_0000268423" description="Bifunctional protein FolD">
    <location>
        <begin position="1"/>
        <end position="283"/>
    </location>
</feature>
<feature type="binding site" evidence="1">
    <location>
        <begin position="165"/>
        <end position="167"/>
    </location>
    <ligand>
        <name>NADP(+)</name>
        <dbReference type="ChEBI" id="CHEBI:58349"/>
    </ligand>
</feature>
<feature type="binding site" evidence="1">
    <location>
        <position position="190"/>
    </location>
    <ligand>
        <name>NADP(+)</name>
        <dbReference type="ChEBI" id="CHEBI:58349"/>
    </ligand>
</feature>
<feature type="binding site" evidence="1">
    <location>
        <position position="231"/>
    </location>
    <ligand>
        <name>NADP(+)</name>
        <dbReference type="ChEBI" id="CHEBI:58349"/>
    </ligand>
</feature>
<keyword id="KW-0028">Amino-acid biosynthesis</keyword>
<keyword id="KW-0368">Histidine biosynthesis</keyword>
<keyword id="KW-0378">Hydrolase</keyword>
<keyword id="KW-0486">Methionine biosynthesis</keyword>
<keyword id="KW-0511">Multifunctional enzyme</keyword>
<keyword id="KW-0521">NADP</keyword>
<keyword id="KW-0554">One-carbon metabolism</keyword>
<keyword id="KW-0560">Oxidoreductase</keyword>
<keyword id="KW-0658">Purine biosynthesis</keyword>
<keyword id="KW-1185">Reference proteome</keyword>
<proteinExistence type="inferred from homology"/>
<evidence type="ECO:0000255" key="1">
    <source>
        <dbReference type="HAMAP-Rule" id="MF_01576"/>
    </source>
</evidence>
<name>FOLD_NOCFA</name>